<keyword id="KW-0067">ATP-binding</keyword>
<keyword id="KW-0963">Cytoplasm</keyword>
<keyword id="KW-0418">Kinase</keyword>
<keyword id="KW-0547">Nucleotide-binding</keyword>
<keyword id="KW-0808">Transferase</keyword>
<proteinExistence type="inferred from homology"/>
<evidence type="ECO:0000255" key="1">
    <source>
        <dbReference type="HAMAP-Rule" id="MF_00238"/>
    </source>
</evidence>
<feature type="chain" id="PRO_1000048309" description="Cytidylate kinase">
    <location>
        <begin position="1"/>
        <end position="220"/>
    </location>
</feature>
<feature type="binding site" evidence="1">
    <location>
        <begin position="9"/>
        <end position="17"/>
    </location>
    <ligand>
        <name>ATP</name>
        <dbReference type="ChEBI" id="CHEBI:30616"/>
    </ligand>
</feature>
<protein>
    <recommendedName>
        <fullName evidence="1">Cytidylate kinase</fullName>
        <shortName evidence="1">CK</shortName>
        <ecNumber evidence="1">2.7.4.25</ecNumber>
    </recommendedName>
    <alternativeName>
        <fullName evidence="1">Cytidine monophosphate kinase</fullName>
        <shortName evidence="1">CMP kinase</shortName>
    </alternativeName>
</protein>
<name>KCY_THEP1</name>
<organism>
    <name type="scientific">Thermotoga petrophila (strain ATCC BAA-488 / DSM 13995 / JCM 10881 / RKU-1)</name>
    <dbReference type="NCBI Taxonomy" id="390874"/>
    <lineage>
        <taxon>Bacteria</taxon>
        <taxon>Thermotogati</taxon>
        <taxon>Thermotogota</taxon>
        <taxon>Thermotogae</taxon>
        <taxon>Thermotogales</taxon>
        <taxon>Thermotogaceae</taxon>
        <taxon>Thermotoga</taxon>
    </lineage>
</organism>
<accession>A5IME2</accession>
<reference key="1">
    <citation type="submission" date="2007-05" db="EMBL/GenBank/DDBJ databases">
        <title>Complete sequence of Thermotoga petrophila RKU-1.</title>
        <authorList>
            <consortium name="US DOE Joint Genome Institute"/>
            <person name="Copeland A."/>
            <person name="Lucas S."/>
            <person name="Lapidus A."/>
            <person name="Barry K."/>
            <person name="Glavina del Rio T."/>
            <person name="Dalin E."/>
            <person name="Tice H."/>
            <person name="Pitluck S."/>
            <person name="Sims D."/>
            <person name="Brettin T."/>
            <person name="Bruce D."/>
            <person name="Detter J.C."/>
            <person name="Han C."/>
            <person name="Tapia R."/>
            <person name="Schmutz J."/>
            <person name="Larimer F."/>
            <person name="Land M."/>
            <person name="Hauser L."/>
            <person name="Kyrpides N."/>
            <person name="Mikhailova N."/>
            <person name="Nelson K."/>
            <person name="Gogarten J.P."/>
            <person name="Noll K."/>
            <person name="Richardson P."/>
        </authorList>
    </citation>
    <scope>NUCLEOTIDE SEQUENCE [LARGE SCALE GENOMIC DNA]</scope>
    <source>
        <strain>ATCC BAA-488 / DSM 13995 / JCM 10881 / RKU-1</strain>
    </source>
</reference>
<comment type="catalytic activity">
    <reaction evidence="1">
        <text>CMP + ATP = CDP + ADP</text>
        <dbReference type="Rhea" id="RHEA:11600"/>
        <dbReference type="ChEBI" id="CHEBI:30616"/>
        <dbReference type="ChEBI" id="CHEBI:58069"/>
        <dbReference type="ChEBI" id="CHEBI:60377"/>
        <dbReference type="ChEBI" id="CHEBI:456216"/>
        <dbReference type="EC" id="2.7.4.25"/>
    </reaction>
</comment>
<comment type="catalytic activity">
    <reaction evidence="1">
        <text>dCMP + ATP = dCDP + ADP</text>
        <dbReference type="Rhea" id="RHEA:25094"/>
        <dbReference type="ChEBI" id="CHEBI:30616"/>
        <dbReference type="ChEBI" id="CHEBI:57566"/>
        <dbReference type="ChEBI" id="CHEBI:58593"/>
        <dbReference type="ChEBI" id="CHEBI:456216"/>
        <dbReference type="EC" id="2.7.4.25"/>
    </reaction>
</comment>
<comment type="subcellular location">
    <subcellularLocation>
        <location evidence="1">Cytoplasm</location>
    </subcellularLocation>
</comment>
<comment type="similarity">
    <text evidence="1">Belongs to the cytidylate kinase family. Type 1 subfamily.</text>
</comment>
<gene>
    <name evidence="1" type="primary">cmk</name>
    <name type="ordered locus">Tpet_1351</name>
</gene>
<dbReference type="EC" id="2.7.4.25" evidence="1"/>
<dbReference type="EMBL" id="CP000702">
    <property type="protein sequence ID" value="ABQ47365.1"/>
    <property type="molecule type" value="Genomic_DNA"/>
</dbReference>
<dbReference type="RefSeq" id="WP_011943824.1">
    <property type="nucleotide sequence ID" value="NC_009486.1"/>
</dbReference>
<dbReference type="SMR" id="A5IME2"/>
<dbReference type="STRING" id="390874.Tpet_1351"/>
<dbReference type="KEGG" id="tpt:Tpet_1351"/>
<dbReference type="eggNOG" id="COG0283">
    <property type="taxonomic scope" value="Bacteria"/>
</dbReference>
<dbReference type="HOGENOM" id="CLU_079959_0_2_0"/>
<dbReference type="Proteomes" id="UP000006558">
    <property type="component" value="Chromosome"/>
</dbReference>
<dbReference type="GO" id="GO:0005829">
    <property type="term" value="C:cytosol"/>
    <property type="evidence" value="ECO:0007669"/>
    <property type="project" value="TreeGrafter"/>
</dbReference>
<dbReference type="GO" id="GO:0005524">
    <property type="term" value="F:ATP binding"/>
    <property type="evidence" value="ECO:0007669"/>
    <property type="project" value="UniProtKB-UniRule"/>
</dbReference>
<dbReference type="GO" id="GO:0036430">
    <property type="term" value="F:CMP kinase activity"/>
    <property type="evidence" value="ECO:0007669"/>
    <property type="project" value="RHEA"/>
</dbReference>
<dbReference type="GO" id="GO:0036431">
    <property type="term" value="F:dCMP kinase activity"/>
    <property type="evidence" value="ECO:0007669"/>
    <property type="project" value="RHEA"/>
</dbReference>
<dbReference type="GO" id="GO:0015949">
    <property type="term" value="P:nucleobase-containing small molecule interconversion"/>
    <property type="evidence" value="ECO:0007669"/>
    <property type="project" value="TreeGrafter"/>
</dbReference>
<dbReference type="GO" id="GO:0006220">
    <property type="term" value="P:pyrimidine nucleotide metabolic process"/>
    <property type="evidence" value="ECO:0007669"/>
    <property type="project" value="UniProtKB-UniRule"/>
</dbReference>
<dbReference type="CDD" id="cd02020">
    <property type="entry name" value="CMPK"/>
    <property type="match status" value="1"/>
</dbReference>
<dbReference type="FunFam" id="3.40.50.300:FF:002458">
    <property type="entry name" value="Cytidylate kinase"/>
    <property type="match status" value="1"/>
</dbReference>
<dbReference type="Gene3D" id="3.40.50.300">
    <property type="entry name" value="P-loop containing nucleotide triphosphate hydrolases"/>
    <property type="match status" value="1"/>
</dbReference>
<dbReference type="HAMAP" id="MF_00238">
    <property type="entry name" value="Cytidyl_kinase_type1"/>
    <property type="match status" value="1"/>
</dbReference>
<dbReference type="InterPro" id="IPR003136">
    <property type="entry name" value="Cytidylate_kin"/>
</dbReference>
<dbReference type="InterPro" id="IPR011994">
    <property type="entry name" value="Cytidylate_kinase_dom"/>
</dbReference>
<dbReference type="InterPro" id="IPR027417">
    <property type="entry name" value="P-loop_NTPase"/>
</dbReference>
<dbReference type="NCBIfam" id="TIGR00017">
    <property type="entry name" value="cmk"/>
    <property type="match status" value="1"/>
</dbReference>
<dbReference type="PANTHER" id="PTHR21299:SF2">
    <property type="entry name" value="CYTIDYLATE KINASE"/>
    <property type="match status" value="1"/>
</dbReference>
<dbReference type="PANTHER" id="PTHR21299">
    <property type="entry name" value="CYTIDYLATE KINASE/PANTOATE-BETA-ALANINE LIGASE"/>
    <property type="match status" value="1"/>
</dbReference>
<dbReference type="Pfam" id="PF02224">
    <property type="entry name" value="Cytidylate_kin"/>
    <property type="match status" value="1"/>
</dbReference>
<dbReference type="SUPFAM" id="SSF52540">
    <property type="entry name" value="P-loop containing nucleoside triphosphate hydrolases"/>
    <property type="match status" value="1"/>
</dbReference>
<sequence length="220" mass="24835">MGFQIAIDGPAASGKSTVARLLAEKLGFDHLNTGATYRSVAVYLHERGFSPFSAEKEIENALKDLKIDYVNGRVYINGEDYTEKIQSPEAGVLASNFARLEVVRRHLVRIQREICDDKNIVVEGRDIGTVVLPNAHLKIFLTASLEARVERKLKEYQKRGLKVTKEEVERELISRDEQDSKRNVAPLKPAEDAVIIDTTSMSVEEVLDRILKLVRERMNT</sequence>